<accession>B6I3U1</accession>
<dbReference type="EC" id="4.1.99.1" evidence="1"/>
<dbReference type="EMBL" id="AP009240">
    <property type="protein sequence ID" value="BAG79518.1"/>
    <property type="molecule type" value="Genomic_DNA"/>
</dbReference>
<dbReference type="RefSeq" id="WP_001295247.1">
    <property type="nucleotide sequence ID" value="NC_011415.1"/>
</dbReference>
<dbReference type="SMR" id="B6I3U1"/>
<dbReference type="GeneID" id="75205423"/>
<dbReference type="KEGG" id="ecy:ECSE_3994"/>
<dbReference type="HOGENOM" id="CLU_047223_0_0_6"/>
<dbReference type="UniPathway" id="UPA00332">
    <property type="reaction ID" value="UER00452"/>
</dbReference>
<dbReference type="Proteomes" id="UP000008199">
    <property type="component" value="Chromosome"/>
</dbReference>
<dbReference type="GO" id="GO:0009034">
    <property type="term" value="F:tryptophanase activity"/>
    <property type="evidence" value="ECO:0007669"/>
    <property type="project" value="UniProtKB-UniRule"/>
</dbReference>
<dbReference type="FunFam" id="3.40.640.10:FF:000039">
    <property type="entry name" value="Tryptophanase"/>
    <property type="match status" value="1"/>
</dbReference>
<dbReference type="Gene3D" id="3.90.1150.10">
    <property type="entry name" value="Aspartate Aminotransferase, domain 1"/>
    <property type="match status" value="1"/>
</dbReference>
<dbReference type="Gene3D" id="3.40.640.10">
    <property type="entry name" value="Type I PLP-dependent aspartate aminotransferase-like (Major domain)"/>
    <property type="match status" value="1"/>
</dbReference>
<dbReference type="HAMAP" id="MF_00544">
    <property type="entry name" value="Tryptophanase"/>
    <property type="match status" value="1"/>
</dbReference>
<dbReference type="InterPro" id="IPR001597">
    <property type="entry name" value="ArAA_b-elim_lyase/Thr_aldolase"/>
</dbReference>
<dbReference type="InterPro" id="IPR011166">
    <property type="entry name" value="Beta-eliminating_lyase"/>
</dbReference>
<dbReference type="InterPro" id="IPR015424">
    <property type="entry name" value="PyrdxlP-dep_Trfase"/>
</dbReference>
<dbReference type="InterPro" id="IPR015421">
    <property type="entry name" value="PyrdxlP-dep_Trfase_major"/>
</dbReference>
<dbReference type="InterPro" id="IPR015422">
    <property type="entry name" value="PyrdxlP-dep_Trfase_small"/>
</dbReference>
<dbReference type="InterPro" id="IPR013440">
    <property type="entry name" value="TNase"/>
</dbReference>
<dbReference type="InterPro" id="IPR018176">
    <property type="entry name" value="Tryptophanase_CS"/>
</dbReference>
<dbReference type="NCBIfam" id="NF009709">
    <property type="entry name" value="PRK13238.1"/>
    <property type="match status" value="1"/>
</dbReference>
<dbReference type="NCBIfam" id="TIGR02617">
    <property type="entry name" value="tnaA_trp_ase"/>
    <property type="match status" value="1"/>
</dbReference>
<dbReference type="PANTHER" id="PTHR32325">
    <property type="entry name" value="BETA-ELIMINATING LYASE-LIKE PROTEIN-RELATED"/>
    <property type="match status" value="1"/>
</dbReference>
<dbReference type="PANTHER" id="PTHR32325:SF4">
    <property type="entry name" value="TRYPTOPHANASE"/>
    <property type="match status" value="1"/>
</dbReference>
<dbReference type="Pfam" id="PF01212">
    <property type="entry name" value="Beta_elim_lyase"/>
    <property type="match status" value="1"/>
</dbReference>
<dbReference type="PIRSF" id="PIRSF001386">
    <property type="entry name" value="Trpase"/>
    <property type="match status" value="1"/>
</dbReference>
<dbReference type="SUPFAM" id="SSF53383">
    <property type="entry name" value="PLP-dependent transferases"/>
    <property type="match status" value="1"/>
</dbReference>
<dbReference type="PROSITE" id="PS00853">
    <property type="entry name" value="BETA_ELIM_LYASE"/>
    <property type="match status" value="1"/>
</dbReference>
<evidence type="ECO:0000255" key="1">
    <source>
        <dbReference type="HAMAP-Rule" id="MF_00544"/>
    </source>
</evidence>
<comment type="catalytic activity">
    <reaction evidence="1">
        <text>L-tryptophan + H2O = indole + pyruvate + NH4(+)</text>
        <dbReference type="Rhea" id="RHEA:19553"/>
        <dbReference type="ChEBI" id="CHEBI:15361"/>
        <dbReference type="ChEBI" id="CHEBI:15377"/>
        <dbReference type="ChEBI" id="CHEBI:16881"/>
        <dbReference type="ChEBI" id="CHEBI:28938"/>
        <dbReference type="ChEBI" id="CHEBI:57912"/>
        <dbReference type="EC" id="4.1.99.1"/>
    </reaction>
</comment>
<comment type="cofactor">
    <cofactor evidence="1">
        <name>pyridoxal 5'-phosphate</name>
        <dbReference type="ChEBI" id="CHEBI:597326"/>
    </cofactor>
</comment>
<comment type="pathway">
    <text evidence="1">Amino-acid degradation; L-tryptophan degradation via pyruvate pathway; indole and pyruvate from L-tryptophan: step 1/1.</text>
</comment>
<comment type="subunit">
    <text evidence="1">Homotetramer.</text>
</comment>
<comment type="similarity">
    <text evidence="1">Belongs to the beta-eliminating lyase family.</text>
</comment>
<reference key="1">
    <citation type="journal article" date="2008" name="DNA Res.">
        <title>Complete genome sequence and comparative analysis of the wild-type commensal Escherichia coli strain SE11 isolated from a healthy adult.</title>
        <authorList>
            <person name="Oshima K."/>
            <person name="Toh H."/>
            <person name="Ogura Y."/>
            <person name="Sasamoto H."/>
            <person name="Morita H."/>
            <person name="Park S.-H."/>
            <person name="Ooka T."/>
            <person name="Iyoda S."/>
            <person name="Taylor T.D."/>
            <person name="Hayashi T."/>
            <person name="Itoh K."/>
            <person name="Hattori M."/>
        </authorList>
    </citation>
    <scope>NUCLEOTIDE SEQUENCE [LARGE SCALE GENOMIC DNA]</scope>
    <source>
        <strain>SE11</strain>
    </source>
</reference>
<feature type="chain" id="PRO_1000128912" description="Tryptophanase">
    <location>
        <begin position="1"/>
        <end position="471"/>
    </location>
</feature>
<feature type="modified residue" description="N6-acetyllysine" evidence="1">
    <location>
        <position position="5"/>
    </location>
</feature>
<feature type="modified residue" description="N6-acetyllysine" evidence="1">
    <location>
        <position position="115"/>
    </location>
</feature>
<feature type="modified residue" description="N6-acetyllysine" evidence="1">
    <location>
        <position position="156"/>
    </location>
</feature>
<feature type="modified residue" description="N6-(pyridoxal phosphate)lysine" evidence="1">
    <location>
        <position position="270"/>
    </location>
</feature>
<feature type="modified residue" description="N6-acetyllysine" evidence="1">
    <location>
        <position position="450"/>
    </location>
</feature>
<gene>
    <name evidence="1" type="primary">tnaA</name>
    <name type="ordered locus">ECSE_3994</name>
</gene>
<sequence>MENFKHLPEPFRIRVIEPVKRTTRAYREEAIIKSGMNPFLLDSEDVFIDLLTDSGTGAVTQSMQAAMMRGDEAYSGSRSYYALAESVKNIFGYQYTIPTHQGRGAEQIYIPVLIKKREQEKGLDRSKMVAFSNYFFDTTQGHSQINGCTVRNVYIKEAFDTGVRYDFKGNFDLEGLERGIEEVGPNNVPYIVATITSNSAGGQPVSLANLKAMYSIAKKYDIPVVMDSARFAENAYFIKQREAEYKDWTIEQITRETYKYADMLAMSAKKDAMVPMGGLLCMKDDSFFDVYTECRTLCVVQEGFPTYGGLEGGAMERLAVGLYDGMNLDWLAYRIAQVQYLVDGLEEIGVVCQQAGGHAAFVDAGKLLPHIPADQFPAQALACELYKVAGIRAVEIGSFLLGRDPKTGKQLPCPAELLRLTIPRATYTQTHMDFIIEAFKHVKENAANIKGLTFTYEPKVLRHFTAKLKEV</sequence>
<protein>
    <recommendedName>
        <fullName evidence="1">Tryptophanase</fullName>
        <ecNumber evidence="1">4.1.99.1</ecNumber>
    </recommendedName>
    <alternativeName>
        <fullName evidence="1">L-tryptophan indole-lyase</fullName>
        <shortName evidence="1">TNase</shortName>
    </alternativeName>
</protein>
<proteinExistence type="inferred from homology"/>
<keyword id="KW-0007">Acetylation</keyword>
<keyword id="KW-0456">Lyase</keyword>
<keyword id="KW-0663">Pyridoxal phosphate</keyword>
<keyword id="KW-0823">Tryptophan catabolism</keyword>
<organism>
    <name type="scientific">Escherichia coli (strain SE11)</name>
    <dbReference type="NCBI Taxonomy" id="409438"/>
    <lineage>
        <taxon>Bacteria</taxon>
        <taxon>Pseudomonadati</taxon>
        <taxon>Pseudomonadota</taxon>
        <taxon>Gammaproteobacteria</taxon>
        <taxon>Enterobacterales</taxon>
        <taxon>Enterobacteriaceae</taxon>
        <taxon>Escherichia</taxon>
    </lineage>
</organism>
<name>TNAA_ECOSE</name>